<sequence>MTTETLNIMVEFTGGLEMLFSDQRNHKLTIPQTDSKGDPVTVGWLVNYLCEEIMQDSRKDMFILDDHVRPGILVLINDADWELEGEASYVLQPNDNILFVSTLHGG</sequence>
<comment type="function">
    <text evidence="1">Acts as a sulfur carrier required for 2-thiolation of mcm(5)S(2)U at tRNA wobble positions of cytosolic tRNA(Lys), tRNA(Glu) and tRNA(Gln). Serves as sulfur donor in tRNA 2-thiolation reaction by being thiocarboxylated (-COSH) at its C-terminus by the MOCS3 homolog UBA4. The sulfur is then transferred to tRNA to form 2-thiolation of mcm(5)S(2)U. Prior mcm(5) tRNA modification by the elongator complex is required for 2-thiolation. Also acts as a ubiquitin-like protein (UBL) that is covalently conjugated via an isopeptide bond to lysine residues of target proteins such as AHP1. The thiocarboxylated form serves as substrate for conjugation and oxidative stress specifically induces the formation of UBL-protein conjugates.</text>
</comment>
<comment type="pathway">
    <text evidence="1">tRNA modification; 5-methoxycarbonylmethyl-2-thiouridine-tRNA biosynthesis.</text>
</comment>
<comment type="subcellular location">
    <subcellularLocation>
        <location evidence="1">Cytoplasm</location>
    </subcellularLocation>
</comment>
<comment type="PTM">
    <text evidence="1">C-terminal thiocarboxylation occurs in 2 steps, it is first acyl-adenylated (-COAMP) via the hesA/moeB/thiF part of UBA4, then thiocarboxylated (-COSH) via the rhodanese domain of UBA4.</text>
</comment>
<comment type="similarity">
    <text evidence="1">Belongs to the URM1 family.</text>
</comment>
<organism>
    <name type="scientific">Sclerotinia sclerotiorum (strain ATCC 18683 / 1980 / Ss-1)</name>
    <name type="common">White mold</name>
    <name type="synonym">Whetzelinia sclerotiorum</name>
    <dbReference type="NCBI Taxonomy" id="665079"/>
    <lineage>
        <taxon>Eukaryota</taxon>
        <taxon>Fungi</taxon>
        <taxon>Dikarya</taxon>
        <taxon>Ascomycota</taxon>
        <taxon>Pezizomycotina</taxon>
        <taxon>Leotiomycetes</taxon>
        <taxon>Helotiales</taxon>
        <taxon>Sclerotiniaceae</taxon>
        <taxon>Sclerotinia</taxon>
    </lineage>
</organism>
<feature type="chain" id="PRO_0000367888" description="Ubiquitin-related modifier 1">
    <location>
        <begin position="1"/>
        <end position="106"/>
    </location>
</feature>
<feature type="modified residue" description="1-thioglycine" evidence="1">
    <location>
        <position position="106"/>
    </location>
</feature>
<feature type="cross-link" description="Glycyl lysine isopeptide (Gly-Lys) (interchain with K-? in acceptor proteins)" evidence="1">
    <location>
        <position position="106"/>
    </location>
</feature>
<accession>A7ETU4</accession>
<proteinExistence type="inferred from homology"/>
<dbReference type="EMBL" id="CH476632">
    <property type="protein sequence ID" value="EDN92886.1"/>
    <property type="molecule type" value="Genomic_DNA"/>
</dbReference>
<dbReference type="RefSeq" id="XP_001589987.1">
    <property type="nucleotide sequence ID" value="XM_001589937.1"/>
</dbReference>
<dbReference type="SMR" id="A7ETU4"/>
<dbReference type="FunCoup" id="A7ETU4">
    <property type="interactions" value="835"/>
</dbReference>
<dbReference type="STRING" id="665079.A7ETU4"/>
<dbReference type="GeneID" id="5486380"/>
<dbReference type="KEGG" id="ssl:SS1G_08751"/>
<dbReference type="VEuPathDB" id="FungiDB:sscle_14g099210"/>
<dbReference type="InParanoid" id="A7ETU4"/>
<dbReference type="OMA" id="DYELQPN"/>
<dbReference type="OrthoDB" id="10248987at2759"/>
<dbReference type="UniPathway" id="UPA00988"/>
<dbReference type="Proteomes" id="UP000001312">
    <property type="component" value="Unassembled WGS sequence"/>
</dbReference>
<dbReference type="GO" id="GO:0005829">
    <property type="term" value="C:cytosol"/>
    <property type="evidence" value="ECO:0007669"/>
    <property type="project" value="UniProtKB-UniRule"/>
</dbReference>
<dbReference type="GO" id="GO:0005634">
    <property type="term" value="C:nucleus"/>
    <property type="evidence" value="ECO:0000318"/>
    <property type="project" value="GO_Central"/>
</dbReference>
<dbReference type="GO" id="GO:0031386">
    <property type="term" value="F:protein tag activity"/>
    <property type="evidence" value="ECO:0000318"/>
    <property type="project" value="GO_Central"/>
</dbReference>
<dbReference type="GO" id="GO:0032447">
    <property type="term" value="P:protein urmylation"/>
    <property type="evidence" value="ECO:0000318"/>
    <property type="project" value="GO_Central"/>
</dbReference>
<dbReference type="GO" id="GO:0034227">
    <property type="term" value="P:tRNA thio-modification"/>
    <property type="evidence" value="ECO:0007669"/>
    <property type="project" value="UniProtKB-UniRule"/>
</dbReference>
<dbReference type="GO" id="GO:0002098">
    <property type="term" value="P:tRNA wobble uridine modification"/>
    <property type="evidence" value="ECO:0007669"/>
    <property type="project" value="UniProtKB-UniRule"/>
</dbReference>
<dbReference type="CDD" id="cd01764">
    <property type="entry name" value="Ubl_Urm1"/>
    <property type="match status" value="1"/>
</dbReference>
<dbReference type="Gene3D" id="3.10.20.30">
    <property type="match status" value="1"/>
</dbReference>
<dbReference type="HAMAP" id="MF_03048">
    <property type="entry name" value="Urm1"/>
    <property type="match status" value="1"/>
</dbReference>
<dbReference type="InterPro" id="IPR012675">
    <property type="entry name" value="Beta-grasp_dom_sf"/>
</dbReference>
<dbReference type="InterPro" id="IPR016155">
    <property type="entry name" value="Mopterin_synth/thiamin_S_b"/>
</dbReference>
<dbReference type="InterPro" id="IPR015221">
    <property type="entry name" value="Urm1"/>
</dbReference>
<dbReference type="PANTHER" id="PTHR14986">
    <property type="entry name" value="RURM1 PROTEIN"/>
    <property type="match status" value="1"/>
</dbReference>
<dbReference type="Pfam" id="PF09138">
    <property type="entry name" value="Urm1"/>
    <property type="match status" value="1"/>
</dbReference>
<dbReference type="PIRSF" id="PIRSF037379">
    <property type="entry name" value="Ubiquitin-related_modifier_1"/>
    <property type="match status" value="1"/>
</dbReference>
<dbReference type="SUPFAM" id="SSF54285">
    <property type="entry name" value="MoaD/ThiS"/>
    <property type="match status" value="1"/>
</dbReference>
<protein>
    <recommendedName>
        <fullName evidence="1">Ubiquitin-related modifier 1</fullName>
    </recommendedName>
</protein>
<gene>
    <name type="primary">urm1</name>
    <name type="ORF">SS1G_08751</name>
</gene>
<evidence type="ECO:0000255" key="1">
    <source>
        <dbReference type="HAMAP-Rule" id="MF_03048"/>
    </source>
</evidence>
<keyword id="KW-0963">Cytoplasm</keyword>
<keyword id="KW-1017">Isopeptide bond</keyword>
<keyword id="KW-1185">Reference proteome</keyword>
<keyword id="KW-0819">tRNA processing</keyword>
<keyword id="KW-0833">Ubl conjugation pathway</keyword>
<reference key="1">
    <citation type="journal article" date="2011" name="PLoS Genet.">
        <title>Genomic analysis of the necrotrophic fungal pathogens Sclerotinia sclerotiorum and Botrytis cinerea.</title>
        <authorList>
            <person name="Amselem J."/>
            <person name="Cuomo C.A."/>
            <person name="van Kan J.A.L."/>
            <person name="Viaud M."/>
            <person name="Benito E.P."/>
            <person name="Couloux A."/>
            <person name="Coutinho P.M."/>
            <person name="de Vries R.P."/>
            <person name="Dyer P.S."/>
            <person name="Fillinger S."/>
            <person name="Fournier E."/>
            <person name="Gout L."/>
            <person name="Hahn M."/>
            <person name="Kohn L."/>
            <person name="Lapalu N."/>
            <person name="Plummer K.M."/>
            <person name="Pradier J.-M."/>
            <person name="Quevillon E."/>
            <person name="Sharon A."/>
            <person name="Simon A."/>
            <person name="ten Have A."/>
            <person name="Tudzynski B."/>
            <person name="Tudzynski P."/>
            <person name="Wincker P."/>
            <person name="Andrew M."/>
            <person name="Anthouard V."/>
            <person name="Beever R.E."/>
            <person name="Beffa R."/>
            <person name="Benoit I."/>
            <person name="Bouzid O."/>
            <person name="Brault B."/>
            <person name="Chen Z."/>
            <person name="Choquer M."/>
            <person name="Collemare J."/>
            <person name="Cotton P."/>
            <person name="Danchin E.G."/>
            <person name="Da Silva C."/>
            <person name="Gautier A."/>
            <person name="Giraud C."/>
            <person name="Giraud T."/>
            <person name="Gonzalez C."/>
            <person name="Grossetete S."/>
            <person name="Gueldener U."/>
            <person name="Henrissat B."/>
            <person name="Howlett B.J."/>
            <person name="Kodira C."/>
            <person name="Kretschmer M."/>
            <person name="Lappartient A."/>
            <person name="Leroch M."/>
            <person name="Levis C."/>
            <person name="Mauceli E."/>
            <person name="Neuveglise C."/>
            <person name="Oeser B."/>
            <person name="Pearson M."/>
            <person name="Poulain J."/>
            <person name="Poussereau N."/>
            <person name="Quesneville H."/>
            <person name="Rascle C."/>
            <person name="Schumacher J."/>
            <person name="Segurens B."/>
            <person name="Sexton A."/>
            <person name="Silva E."/>
            <person name="Sirven C."/>
            <person name="Soanes D.M."/>
            <person name="Talbot N.J."/>
            <person name="Templeton M."/>
            <person name="Yandava C."/>
            <person name="Yarden O."/>
            <person name="Zeng Q."/>
            <person name="Rollins J.A."/>
            <person name="Lebrun M.-H."/>
            <person name="Dickman M."/>
        </authorList>
    </citation>
    <scope>NUCLEOTIDE SEQUENCE [LARGE SCALE GENOMIC DNA]</scope>
    <source>
        <strain>ATCC 18683 / 1980 / Ss-1</strain>
    </source>
</reference>
<name>URM1_SCLS1</name>